<sequence length="120" mass="13775">MKILFVLISILYAVYCFSSEEDVDSAYLANELEPVEDINSEQYAALEPKEEQERSCADMGQDCKDDCDCCLNIATCNCWFGRYFCSCTFGDYQTCLRKKGKCKRNRPQSCPRSNLNRKKG</sequence>
<dbReference type="EMBL" id="EU926103">
    <property type="protein sequence ID" value="ACI41435.1"/>
    <property type="molecule type" value="mRNA"/>
</dbReference>
<dbReference type="EMBL" id="FM864107">
    <property type="protein sequence ID" value="CAS03704.1"/>
    <property type="molecule type" value="mRNA"/>
</dbReference>
<dbReference type="SMR" id="B6DD19"/>
<dbReference type="ArachnoServer" id="AS001042">
    <property type="toxin name" value="U13-lycotoxin-Ls1a"/>
</dbReference>
<dbReference type="GO" id="GO:0005576">
    <property type="term" value="C:extracellular region"/>
    <property type="evidence" value="ECO:0007669"/>
    <property type="project" value="UniProtKB-SubCell"/>
</dbReference>
<dbReference type="GO" id="GO:0090729">
    <property type="term" value="F:toxin activity"/>
    <property type="evidence" value="ECO:0007669"/>
    <property type="project" value="UniProtKB-KW"/>
</dbReference>
<feature type="signal peptide" evidence="2">
    <location>
        <begin position="1"/>
        <end position="16"/>
    </location>
</feature>
<feature type="propeptide" id="PRO_0000401857" evidence="1">
    <location>
        <begin position="17"/>
        <end position="54"/>
    </location>
</feature>
<feature type="chain" id="PRO_0000401858" description="U13-lycotoxin-Ls1a">
    <location>
        <begin position="55"/>
        <end position="120"/>
    </location>
</feature>
<feature type="domain" description="Agouti">
    <location>
        <begin position="56"/>
        <end position="95"/>
    </location>
</feature>
<feature type="disulfide bond" evidence="1">
    <location>
        <begin position="56"/>
        <end position="70"/>
    </location>
</feature>
<feature type="disulfide bond" evidence="1">
    <location>
        <begin position="63"/>
        <end position="76"/>
    </location>
</feature>
<feature type="disulfide bond" evidence="1">
    <location>
        <begin position="69"/>
        <end position="87"/>
    </location>
</feature>
<feature type="disulfide bond" evidence="1">
    <location>
        <begin position="78"/>
        <end position="85"/>
    </location>
</feature>
<organism>
    <name type="scientific">Lycosa singoriensis</name>
    <name type="common">Wolf spider</name>
    <name type="synonym">Aranea singoriensis</name>
    <dbReference type="NCBI Taxonomy" id="434756"/>
    <lineage>
        <taxon>Eukaryota</taxon>
        <taxon>Metazoa</taxon>
        <taxon>Ecdysozoa</taxon>
        <taxon>Arthropoda</taxon>
        <taxon>Chelicerata</taxon>
        <taxon>Arachnida</taxon>
        <taxon>Araneae</taxon>
        <taxon>Araneomorphae</taxon>
        <taxon>Entelegynae</taxon>
        <taxon>Lycosoidea</taxon>
        <taxon>Lycosidae</taxon>
        <taxon>Lycosa</taxon>
    </lineage>
</organism>
<accession>B6DD19</accession>
<protein>
    <recommendedName>
        <fullName>U13-lycotoxin-Ls1a</fullName>
    </recommendedName>
    <alternativeName>
        <fullName>Toxin-like structure LSTX-L1</fullName>
    </alternativeName>
</protein>
<evidence type="ECO:0000250" key="1"/>
<evidence type="ECO:0000255" key="2"/>
<evidence type="ECO:0000305" key="3"/>
<proteinExistence type="evidence at transcript level"/>
<name>TXD01_LYCSI</name>
<reference key="1">
    <citation type="journal article" date="2010" name="Zoology">
        <title>Transcriptome analysis of the venom glands of the Chinese wolf spider Lycosa singoriensis.</title>
        <authorList>
            <person name="Zhang Y."/>
            <person name="Chen J."/>
            <person name="Tang X."/>
            <person name="Wang F."/>
            <person name="Jiang L."/>
            <person name="Xiong X."/>
            <person name="Wang M."/>
            <person name="Rong M."/>
            <person name="Liu Z."/>
            <person name="Liang S."/>
        </authorList>
    </citation>
    <scope>NUCLEOTIDE SEQUENCE [LARGE SCALE MRNA]</scope>
    <source>
        <tissue>Venom gland</tissue>
    </source>
</reference>
<comment type="subcellular location">
    <subcellularLocation>
        <location evidence="1">Secreted</location>
    </subcellularLocation>
</comment>
<comment type="tissue specificity">
    <text>Expressed by the venom gland.</text>
</comment>
<comment type="domain">
    <text evidence="1">The presence of a 'disulfide through disulfide kOR' structurally defines this protein as a knottin.</text>
</comment>
<comment type="PTM">
    <text evidence="3">Contains 6 disulfide bonds.</text>
</comment>
<comment type="similarity">
    <text evidence="3">Belongs to the neurotoxin 05 (agouti) family.</text>
</comment>
<keyword id="KW-1015">Disulfide bond</keyword>
<keyword id="KW-0960">Knottin</keyword>
<keyword id="KW-0964">Secreted</keyword>
<keyword id="KW-0732">Signal</keyword>
<keyword id="KW-0800">Toxin</keyword>